<dbReference type="EC" id="3.6.5.3" evidence="2"/>
<dbReference type="EMBL" id="AP009153">
    <property type="protein sequence ID" value="BAH37913.1"/>
    <property type="molecule type" value="Genomic_DNA"/>
</dbReference>
<dbReference type="RefSeq" id="WP_012682360.1">
    <property type="nucleotide sequence ID" value="NC_012489.1"/>
</dbReference>
<dbReference type="SMR" id="C1A6Q3"/>
<dbReference type="STRING" id="379066.GAU_0871"/>
<dbReference type="KEGG" id="gau:GAU_0871"/>
<dbReference type="eggNOG" id="COG0050">
    <property type="taxonomic scope" value="Bacteria"/>
</dbReference>
<dbReference type="HOGENOM" id="CLU_007265_0_1_0"/>
<dbReference type="OrthoDB" id="9803139at2"/>
<dbReference type="Proteomes" id="UP000002209">
    <property type="component" value="Chromosome"/>
</dbReference>
<dbReference type="GO" id="GO:0005829">
    <property type="term" value="C:cytosol"/>
    <property type="evidence" value="ECO:0007669"/>
    <property type="project" value="TreeGrafter"/>
</dbReference>
<dbReference type="GO" id="GO:0005525">
    <property type="term" value="F:GTP binding"/>
    <property type="evidence" value="ECO:0007669"/>
    <property type="project" value="UniProtKB-UniRule"/>
</dbReference>
<dbReference type="GO" id="GO:0003924">
    <property type="term" value="F:GTPase activity"/>
    <property type="evidence" value="ECO:0007669"/>
    <property type="project" value="InterPro"/>
</dbReference>
<dbReference type="GO" id="GO:0003746">
    <property type="term" value="F:translation elongation factor activity"/>
    <property type="evidence" value="ECO:0007669"/>
    <property type="project" value="UniProtKB-UniRule"/>
</dbReference>
<dbReference type="CDD" id="cd03697">
    <property type="entry name" value="EFTU_II"/>
    <property type="match status" value="1"/>
</dbReference>
<dbReference type="CDD" id="cd03707">
    <property type="entry name" value="EFTU_III"/>
    <property type="match status" value="1"/>
</dbReference>
<dbReference type="FunFam" id="2.40.30.10:FF:000001">
    <property type="entry name" value="Elongation factor Tu"/>
    <property type="match status" value="1"/>
</dbReference>
<dbReference type="FunFam" id="3.40.50.300:FF:000003">
    <property type="entry name" value="Elongation factor Tu"/>
    <property type="match status" value="1"/>
</dbReference>
<dbReference type="Gene3D" id="3.40.50.300">
    <property type="entry name" value="P-loop containing nucleotide triphosphate hydrolases"/>
    <property type="match status" value="1"/>
</dbReference>
<dbReference type="Gene3D" id="2.40.30.10">
    <property type="entry name" value="Translation factors"/>
    <property type="match status" value="2"/>
</dbReference>
<dbReference type="HAMAP" id="MF_00118_B">
    <property type="entry name" value="EF_Tu_B"/>
    <property type="match status" value="1"/>
</dbReference>
<dbReference type="InterPro" id="IPR050055">
    <property type="entry name" value="EF-Tu_GTPase"/>
</dbReference>
<dbReference type="InterPro" id="IPR004161">
    <property type="entry name" value="EFTu-like_2"/>
</dbReference>
<dbReference type="InterPro" id="IPR033720">
    <property type="entry name" value="EFTU_2"/>
</dbReference>
<dbReference type="InterPro" id="IPR027417">
    <property type="entry name" value="P-loop_NTPase"/>
</dbReference>
<dbReference type="InterPro" id="IPR005225">
    <property type="entry name" value="Small_GTP-bd"/>
</dbReference>
<dbReference type="InterPro" id="IPR000795">
    <property type="entry name" value="T_Tr_GTP-bd_dom"/>
</dbReference>
<dbReference type="InterPro" id="IPR009000">
    <property type="entry name" value="Transl_B-barrel_sf"/>
</dbReference>
<dbReference type="InterPro" id="IPR009001">
    <property type="entry name" value="Transl_elong_EF1A/Init_IF2_C"/>
</dbReference>
<dbReference type="InterPro" id="IPR004541">
    <property type="entry name" value="Transl_elong_EFTu/EF1A_bac/org"/>
</dbReference>
<dbReference type="InterPro" id="IPR004160">
    <property type="entry name" value="Transl_elong_EFTu/EF1A_C"/>
</dbReference>
<dbReference type="NCBIfam" id="TIGR00485">
    <property type="entry name" value="EF-Tu"/>
    <property type="match status" value="1"/>
</dbReference>
<dbReference type="NCBIfam" id="NF000766">
    <property type="entry name" value="PRK00049.1"/>
    <property type="match status" value="1"/>
</dbReference>
<dbReference type="NCBIfam" id="NF009372">
    <property type="entry name" value="PRK12735.1"/>
    <property type="match status" value="1"/>
</dbReference>
<dbReference type="NCBIfam" id="NF009373">
    <property type="entry name" value="PRK12736.1"/>
    <property type="match status" value="1"/>
</dbReference>
<dbReference type="NCBIfam" id="TIGR00231">
    <property type="entry name" value="small_GTP"/>
    <property type="match status" value="1"/>
</dbReference>
<dbReference type="PANTHER" id="PTHR43721:SF22">
    <property type="entry name" value="ELONGATION FACTOR TU, MITOCHONDRIAL"/>
    <property type="match status" value="1"/>
</dbReference>
<dbReference type="PANTHER" id="PTHR43721">
    <property type="entry name" value="ELONGATION FACTOR TU-RELATED"/>
    <property type="match status" value="1"/>
</dbReference>
<dbReference type="Pfam" id="PF00009">
    <property type="entry name" value="GTP_EFTU"/>
    <property type="match status" value="1"/>
</dbReference>
<dbReference type="Pfam" id="PF03144">
    <property type="entry name" value="GTP_EFTU_D2"/>
    <property type="match status" value="1"/>
</dbReference>
<dbReference type="Pfam" id="PF03143">
    <property type="entry name" value="GTP_EFTU_D3"/>
    <property type="match status" value="1"/>
</dbReference>
<dbReference type="PRINTS" id="PR00315">
    <property type="entry name" value="ELONGATNFCT"/>
</dbReference>
<dbReference type="SUPFAM" id="SSF50465">
    <property type="entry name" value="EF-Tu/eEF-1alpha/eIF2-gamma C-terminal domain"/>
    <property type="match status" value="1"/>
</dbReference>
<dbReference type="SUPFAM" id="SSF52540">
    <property type="entry name" value="P-loop containing nucleoside triphosphate hydrolases"/>
    <property type="match status" value="1"/>
</dbReference>
<dbReference type="SUPFAM" id="SSF50447">
    <property type="entry name" value="Translation proteins"/>
    <property type="match status" value="1"/>
</dbReference>
<dbReference type="PROSITE" id="PS51722">
    <property type="entry name" value="G_TR_2"/>
    <property type="match status" value="1"/>
</dbReference>
<protein>
    <recommendedName>
        <fullName evidence="2">Elongation factor Tu</fullName>
        <shortName evidence="2">EF-Tu</shortName>
        <ecNumber evidence="2">3.6.5.3</ecNumber>
    </recommendedName>
</protein>
<comment type="function">
    <text evidence="2">GTP hydrolase that promotes the GTP-dependent binding of aminoacyl-tRNA to the A-site of ribosomes during protein biosynthesis.</text>
</comment>
<comment type="catalytic activity">
    <reaction evidence="2">
        <text>GTP + H2O = GDP + phosphate + H(+)</text>
        <dbReference type="Rhea" id="RHEA:19669"/>
        <dbReference type="ChEBI" id="CHEBI:15377"/>
        <dbReference type="ChEBI" id="CHEBI:15378"/>
        <dbReference type="ChEBI" id="CHEBI:37565"/>
        <dbReference type="ChEBI" id="CHEBI:43474"/>
        <dbReference type="ChEBI" id="CHEBI:58189"/>
        <dbReference type="EC" id="3.6.5.3"/>
    </reaction>
    <physiologicalReaction direction="left-to-right" evidence="2">
        <dbReference type="Rhea" id="RHEA:19670"/>
    </physiologicalReaction>
</comment>
<comment type="subunit">
    <text evidence="2">Monomer.</text>
</comment>
<comment type="subcellular location">
    <subcellularLocation>
        <location evidence="2">Cytoplasm</location>
    </subcellularLocation>
</comment>
<comment type="similarity">
    <text evidence="2">Belongs to the TRAFAC class translation factor GTPase superfamily. Classic translation factor GTPase family. EF-Tu/EF-1A subfamily.</text>
</comment>
<keyword id="KW-0963">Cytoplasm</keyword>
<keyword id="KW-0251">Elongation factor</keyword>
<keyword id="KW-0342">GTP-binding</keyword>
<keyword id="KW-0378">Hydrolase</keyword>
<keyword id="KW-0460">Magnesium</keyword>
<keyword id="KW-0479">Metal-binding</keyword>
<keyword id="KW-0547">Nucleotide-binding</keyword>
<keyword id="KW-0648">Protein biosynthesis</keyword>
<keyword id="KW-1185">Reference proteome</keyword>
<evidence type="ECO:0000250" key="1"/>
<evidence type="ECO:0000255" key="2">
    <source>
        <dbReference type="HAMAP-Rule" id="MF_00118"/>
    </source>
</evidence>
<reference key="1">
    <citation type="submission" date="2006-03" db="EMBL/GenBank/DDBJ databases">
        <title>Complete genome sequence of Gemmatimonas aurantiaca T-27 that represents a novel phylum Gemmatimonadetes.</title>
        <authorList>
            <person name="Takasaki K."/>
            <person name="Ichikawa N."/>
            <person name="Miura H."/>
            <person name="Matsushita S."/>
            <person name="Watanabe Y."/>
            <person name="Oguchi A."/>
            <person name="Ankai A."/>
            <person name="Yashiro I."/>
            <person name="Takahashi M."/>
            <person name="Terui Y."/>
            <person name="Fukui S."/>
            <person name="Yokoyama H."/>
            <person name="Tanikawa S."/>
            <person name="Hanada S."/>
            <person name="Kamagata Y."/>
            <person name="Fujita N."/>
        </authorList>
    </citation>
    <scope>NUCLEOTIDE SEQUENCE [LARGE SCALE GENOMIC DNA]</scope>
    <source>
        <strain>DSM 14586 / JCM 11422 / NBRC 100505 / T-27</strain>
    </source>
</reference>
<organism>
    <name type="scientific">Gemmatimonas aurantiaca (strain DSM 14586 / JCM 11422 / NBRC 100505 / T-27)</name>
    <dbReference type="NCBI Taxonomy" id="379066"/>
    <lineage>
        <taxon>Bacteria</taxon>
        <taxon>Pseudomonadati</taxon>
        <taxon>Gemmatimonadota</taxon>
        <taxon>Gemmatimonadia</taxon>
        <taxon>Gemmatimonadales</taxon>
        <taxon>Gemmatimonadaceae</taxon>
        <taxon>Gemmatimonas</taxon>
    </lineage>
</organism>
<feature type="chain" id="PRO_1000203011" description="Elongation factor Tu">
    <location>
        <begin position="1"/>
        <end position="400"/>
    </location>
</feature>
<feature type="domain" description="tr-type G">
    <location>
        <begin position="10"/>
        <end position="210"/>
    </location>
</feature>
<feature type="region of interest" description="G1" evidence="1">
    <location>
        <begin position="19"/>
        <end position="26"/>
    </location>
</feature>
<feature type="region of interest" description="G2" evidence="1">
    <location>
        <begin position="66"/>
        <end position="70"/>
    </location>
</feature>
<feature type="region of interest" description="G3" evidence="1">
    <location>
        <begin position="87"/>
        <end position="90"/>
    </location>
</feature>
<feature type="region of interest" description="G4" evidence="1">
    <location>
        <begin position="142"/>
        <end position="145"/>
    </location>
</feature>
<feature type="region of interest" description="G5" evidence="1">
    <location>
        <begin position="180"/>
        <end position="182"/>
    </location>
</feature>
<feature type="binding site" evidence="2">
    <location>
        <begin position="19"/>
        <end position="26"/>
    </location>
    <ligand>
        <name>GTP</name>
        <dbReference type="ChEBI" id="CHEBI:37565"/>
    </ligand>
</feature>
<feature type="binding site" evidence="2">
    <location>
        <position position="26"/>
    </location>
    <ligand>
        <name>Mg(2+)</name>
        <dbReference type="ChEBI" id="CHEBI:18420"/>
    </ligand>
</feature>
<feature type="binding site" evidence="2">
    <location>
        <begin position="87"/>
        <end position="91"/>
    </location>
    <ligand>
        <name>GTP</name>
        <dbReference type="ChEBI" id="CHEBI:37565"/>
    </ligand>
</feature>
<feature type="binding site" evidence="2">
    <location>
        <begin position="142"/>
        <end position="145"/>
    </location>
    <ligand>
        <name>GTP</name>
        <dbReference type="ChEBI" id="CHEBI:37565"/>
    </ligand>
</feature>
<name>EFTU_GEMAT</name>
<accession>C1A6Q3</accession>
<sequence>MGKAKFERNKPHVNVGTIGHVDHGKTTTTAALTKISADKGYGTKYIAYDEVAKASESQGRRDSTKILTIATSHVEYETENRHYAHVDCPGHADYVKNMITGAAQMDGAILVVSAVDGPMPQTREHILLARQVNVPSVVVFLNKCDLVEDEELLDLVELEVRELLSKYNYPGDDAPVIRGSAINAINGDPKWVAEFMKLYEALDSYIPEPVREVDKPFLLPVEDVFSITGRGTVATGRIERGIVKVGEEVQLVGYNAEKKTIVTGVEMFRKLLDEGQAGDNVGLLLRGVDKKDIERGMVLAKPNSIKPHTKFHSEVYVLTKEEGGRHTPFFKGYRPQFYFRTTDVTGTIELPEGMEMVMPGDNVQMTIELIIPIAMEEQLRFAIREGGRTVGAGVVTKILA</sequence>
<gene>
    <name evidence="2" type="primary">tuf</name>
    <name type="ordered locus">GAU_0871</name>
</gene>
<proteinExistence type="inferred from homology"/>